<comment type="function">
    <text evidence="1">Adapter protein required for efficient degradation of Spx by ClpXP under non-stress conditions. Interaction with Spx stabilizes Spx and exposes the C-terminus of Spx for recognition and proteolysis by ClpXP.</text>
</comment>
<comment type="subunit">
    <text evidence="1">Interacts with Spx.</text>
</comment>
<comment type="subcellular location">
    <subcellularLocation>
        <location evidence="1">Cytoplasm</location>
    </subcellularLocation>
</comment>
<comment type="similarity">
    <text evidence="1">Belongs to the SpxH family.</text>
</comment>
<accession>Q6HLY7</accession>
<reference key="1">
    <citation type="journal article" date="2006" name="J. Bacteriol.">
        <title>Pathogenomic sequence analysis of Bacillus cereus and Bacillus thuringiensis isolates closely related to Bacillus anthracis.</title>
        <authorList>
            <person name="Han C.S."/>
            <person name="Xie G."/>
            <person name="Challacombe J.F."/>
            <person name="Altherr M.R."/>
            <person name="Bhotika S.S."/>
            <person name="Bruce D."/>
            <person name="Campbell C.S."/>
            <person name="Campbell M.L."/>
            <person name="Chen J."/>
            <person name="Chertkov O."/>
            <person name="Cleland C."/>
            <person name="Dimitrijevic M."/>
            <person name="Doggett N.A."/>
            <person name="Fawcett J.J."/>
            <person name="Glavina T."/>
            <person name="Goodwin L.A."/>
            <person name="Hill K.K."/>
            <person name="Hitchcock P."/>
            <person name="Jackson P.J."/>
            <person name="Keim P."/>
            <person name="Kewalramani A.R."/>
            <person name="Longmire J."/>
            <person name="Lucas S."/>
            <person name="Malfatti S."/>
            <person name="McMurry K."/>
            <person name="Meincke L.J."/>
            <person name="Misra M."/>
            <person name="Moseman B.L."/>
            <person name="Mundt M."/>
            <person name="Munk A.C."/>
            <person name="Okinaka R.T."/>
            <person name="Parson-Quintana B."/>
            <person name="Reilly L.P."/>
            <person name="Richardson P."/>
            <person name="Robinson D.L."/>
            <person name="Rubin E."/>
            <person name="Saunders E."/>
            <person name="Tapia R."/>
            <person name="Tesmer J.G."/>
            <person name="Thayer N."/>
            <person name="Thompson L.S."/>
            <person name="Tice H."/>
            <person name="Ticknor L.O."/>
            <person name="Wills P.L."/>
            <person name="Brettin T.S."/>
            <person name="Gilna P."/>
        </authorList>
    </citation>
    <scope>NUCLEOTIDE SEQUENCE [LARGE SCALE GENOMIC DNA]</scope>
    <source>
        <strain>97-27</strain>
    </source>
</reference>
<keyword id="KW-0963">Cytoplasm</keyword>
<sequence length="297" mass="34310">MDKQEAKHINMPSPSACEHKSVEAYLFIDPLCKDCWEIEPFIIKLWLEYGKYFSIRHIVTGKVDGTNASSHKWNKPANIRFVWEKTTSLHGFSCDGKVHMQEASSTPYLVSMAIKAAELQGRKAGSKFLRKLQEYIFLENVSNPDCELLLACAKDSDIDVEEFKKDLYSASAKKAFQCDLKFTNEMHITEIPSLVFFHANSDEEGIKIAGTYSYDVYVQLLKELVKCEIEPEPLPPLEVLLEATQFISSKEVAFIYDCSKQEIERELKKLQLKRKVQMIDVKCERYWKWIAKEKDLV</sequence>
<gene>
    <name evidence="1" type="primary">spxH</name>
    <name type="ordered locus">BT9727_1097</name>
</gene>
<proteinExistence type="inferred from homology"/>
<name>SPXH_BACHK</name>
<dbReference type="EMBL" id="AE017355">
    <property type="protein sequence ID" value="AAT63090.1"/>
    <property type="molecule type" value="Genomic_DNA"/>
</dbReference>
<dbReference type="RefSeq" id="WP_000360638.1">
    <property type="nucleotide sequence ID" value="NC_005957.1"/>
</dbReference>
<dbReference type="RefSeq" id="YP_035434.1">
    <property type="nucleotide sequence ID" value="NC_005957.1"/>
</dbReference>
<dbReference type="SMR" id="Q6HLY7"/>
<dbReference type="KEGG" id="btk:BT9727_1097"/>
<dbReference type="PATRIC" id="fig|281309.8.peg.1156"/>
<dbReference type="HOGENOM" id="CLU_069785_0_0_9"/>
<dbReference type="Proteomes" id="UP000001301">
    <property type="component" value="Chromosome"/>
</dbReference>
<dbReference type="GO" id="GO:0005737">
    <property type="term" value="C:cytoplasm"/>
    <property type="evidence" value="ECO:0007669"/>
    <property type="project" value="UniProtKB-SubCell"/>
</dbReference>
<dbReference type="CDD" id="cd03025">
    <property type="entry name" value="DsbA_FrnE_like"/>
    <property type="match status" value="1"/>
</dbReference>
<dbReference type="Gene3D" id="3.40.30.10">
    <property type="entry name" value="Glutaredoxin"/>
    <property type="match status" value="1"/>
</dbReference>
<dbReference type="Gene3D" id="1.10.472.60">
    <property type="entry name" value="putative protein disulfide isomerase domain"/>
    <property type="match status" value="1"/>
</dbReference>
<dbReference type="HAMAP" id="MF_02245">
    <property type="entry name" value="Adapter_SpxH"/>
    <property type="match status" value="1"/>
</dbReference>
<dbReference type="InterPro" id="IPR046404">
    <property type="entry name" value="Adapter_SpxH"/>
</dbReference>
<dbReference type="InterPro" id="IPR036249">
    <property type="entry name" value="Thioredoxin-like_sf"/>
</dbReference>
<dbReference type="PANTHER" id="PTHR13887:SF47">
    <property type="entry name" value="CLPXP ADAPTER PROTEIN SPXH"/>
    <property type="match status" value="1"/>
</dbReference>
<dbReference type="PANTHER" id="PTHR13887">
    <property type="entry name" value="GLUTATHIONE S-TRANSFERASE KAPPA"/>
    <property type="match status" value="1"/>
</dbReference>
<dbReference type="Pfam" id="PF13743">
    <property type="entry name" value="Thioredoxin_5"/>
    <property type="match status" value="1"/>
</dbReference>
<dbReference type="SUPFAM" id="SSF52833">
    <property type="entry name" value="Thioredoxin-like"/>
    <property type="match status" value="1"/>
</dbReference>
<organism>
    <name type="scientific">Bacillus thuringiensis subsp. konkukian (strain 97-27)</name>
    <dbReference type="NCBI Taxonomy" id="281309"/>
    <lineage>
        <taxon>Bacteria</taxon>
        <taxon>Bacillati</taxon>
        <taxon>Bacillota</taxon>
        <taxon>Bacilli</taxon>
        <taxon>Bacillales</taxon>
        <taxon>Bacillaceae</taxon>
        <taxon>Bacillus</taxon>
        <taxon>Bacillus cereus group</taxon>
    </lineage>
</organism>
<feature type="chain" id="PRO_0000278679" description="ClpXP adapter protein SpxH">
    <location>
        <begin position="1"/>
        <end position="297"/>
    </location>
</feature>
<evidence type="ECO:0000255" key="1">
    <source>
        <dbReference type="HAMAP-Rule" id="MF_02245"/>
    </source>
</evidence>
<protein>
    <recommendedName>
        <fullName evidence="1">ClpXP adapter protein SpxH</fullName>
    </recommendedName>
</protein>